<comment type="function">
    <text evidence="1">Required for the formation of a threonylcarbamoyl group on adenosine at position 37 (t(6)A37) in tRNAs that read codons beginning with adenine. Is involved in the transfer of the threonylcarbamoyl moiety of threonylcarbamoyl-AMP (TC-AMP) to the N6 group of A37, together with TsaE and TsaB. TsaD likely plays a direct catalytic role in this reaction.</text>
</comment>
<comment type="catalytic activity">
    <reaction evidence="1">
        <text>L-threonylcarbamoyladenylate + adenosine(37) in tRNA = N(6)-L-threonylcarbamoyladenosine(37) in tRNA + AMP + H(+)</text>
        <dbReference type="Rhea" id="RHEA:37059"/>
        <dbReference type="Rhea" id="RHEA-COMP:10162"/>
        <dbReference type="Rhea" id="RHEA-COMP:10163"/>
        <dbReference type="ChEBI" id="CHEBI:15378"/>
        <dbReference type="ChEBI" id="CHEBI:73682"/>
        <dbReference type="ChEBI" id="CHEBI:74411"/>
        <dbReference type="ChEBI" id="CHEBI:74418"/>
        <dbReference type="ChEBI" id="CHEBI:456215"/>
        <dbReference type="EC" id="2.3.1.234"/>
    </reaction>
</comment>
<comment type="cofactor">
    <cofactor evidence="1">
        <name>Fe(2+)</name>
        <dbReference type="ChEBI" id="CHEBI:29033"/>
    </cofactor>
    <text evidence="1">Binds 1 Fe(2+) ion per subunit.</text>
</comment>
<comment type="subcellular location">
    <subcellularLocation>
        <location evidence="1">Cytoplasm</location>
    </subcellularLocation>
</comment>
<comment type="similarity">
    <text evidence="1">Belongs to the KAE1 / TsaD family.</text>
</comment>
<comment type="sequence caution" evidence="2">
    <conflict type="erroneous initiation">
        <sequence resource="EMBL-CDS" id="ABI63323"/>
    </conflict>
</comment>
<organism>
    <name type="scientific">Granulibacter bethesdensis (strain ATCC BAA-1260 / CGDNIH1)</name>
    <dbReference type="NCBI Taxonomy" id="391165"/>
    <lineage>
        <taxon>Bacteria</taxon>
        <taxon>Pseudomonadati</taxon>
        <taxon>Pseudomonadota</taxon>
        <taxon>Alphaproteobacteria</taxon>
        <taxon>Acetobacterales</taxon>
        <taxon>Acetobacteraceae</taxon>
        <taxon>Granulibacter</taxon>
    </lineage>
</organism>
<proteinExistence type="inferred from homology"/>
<evidence type="ECO:0000255" key="1">
    <source>
        <dbReference type="HAMAP-Rule" id="MF_01445"/>
    </source>
</evidence>
<evidence type="ECO:0000305" key="2"/>
<gene>
    <name evidence="1" type="primary">tsaD</name>
    <name type="synonym">gcp</name>
    <name type="ordered locus">GbCGDNIH1_2425</name>
</gene>
<name>TSAD_GRABC</name>
<keyword id="KW-0012">Acyltransferase</keyword>
<keyword id="KW-0963">Cytoplasm</keyword>
<keyword id="KW-0408">Iron</keyword>
<keyword id="KW-0479">Metal-binding</keyword>
<keyword id="KW-1185">Reference proteome</keyword>
<keyword id="KW-0808">Transferase</keyword>
<keyword id="KW-0819">tRNA processing</keyword>
<feature type="chain" id="PRO_0000303379" description="tRNA N6-adenosine threonylcarbamoyltransferase">
    <location>
        <begin position="1"/>
        <end position="370"/>
    </location>
</feature>
<feature type="binding site" evidence="1">
    <location>
        <position position="122"/>
    </location>
    <ligand>
        <name>Fe cation</name>
        <dbReference type="ChEBI" id="CHEBI:24875"/>
    </ligand>
</feature>
<feature type="binding site" evidence="1">
    <location>
        <position position="126"/>
    </location>
    <ligand>
        <name>Fe cation</name>
        <dbReference type="ChEBI" id="CHEBI:24875"/>
    </ligand>
</feature>
<feature type="binding site" evidence="1">
    <location>
        <begin position="153"/>
        <end position="157"/>
    </location>
    <ligand>
        <name>substrate</name>
    </ligand>
</feature>
<feature type="binding site" evidence="1">
    <location>
        <position position="186"/>
    </location>
    <ligand>
        <name>substrate</name>
    </ligand>
</feature>
<feature type="binding site" evidence="1">
    <location>
        <position position="199"/>
    </location>
    <ligand>
        <name>substrate</name>
    </ligand>
</feature>
<feature type="binding site" evidence="1">
    <location>
        <position position="298"/>
    </location>
    <ligand>
        <name>substrate</name>
    </ligand>
</feature>
<feature type="binding site" evidence="1">
    <location>
        <position position="326"/>
    </location>
    <ligand>
        <name>Fe cation</name>
        <dbReference type="ChEBI" id="CHEBI:24875"/>
    </ligand>
</feature>
<sequence>MDFPASENLFPGPVLGIETSCDETAAAVLDGSGRILAEIVLSQYDDHARFGGVVPEIAARAHLAYLPGMVTEVMDKAGLRFQDLAAIAATSGPGLIGGLLVGAGLGKGLALAAKRPFIAINHLEAHALAALLPALGGVAEITSGEHFPFLLMLLSGGHCQCILVEGVGRYRRLGGTIDDAVGEAFDKVGKLLGLGWPGGPALERLALQGNPHALAFPRPMKGRVGCDFSFSGLKTAVAQYVARFPDGPLPLSDAADIAASFQAAVADVMADRATAALAMADEIAPAKMLVVSGGVAANAAIRAALSTAAEHRGIAMLAPPPRLCTDNAVMVAWAGLHRLKYGAVSGLDHAPLPRWPLDAPDMALPESTTP</sequence>
<dbReference type="EC" id="2.3.1.234" evidence="1"/>
<dbReference type="EMBL" id="CP000394">
    <property type="protein sequence ID" value="ABI63323.1"/>
    <property type="status" value="ALT_INIT"/>
    <property type="molecule type" value="Genomic_DNA"/>
</dbReference>
<dbReference type="RefSeq" id="WP_011633125.1">
    <property type="nucleotide sequence ID" value="NC_008343.2"/>
</dbReference>
<dbReference type="SMR" id="Q0BPC9"/>
<dbReference type="STRING" id="391165.GbCGDNIH1_2425"/>
<dbReference type="KEGG" id="gbe:GbCGDNIH1_2425"/>
<dbReference type="eggNOG" id="COG0533">
    <property type="taxonomic scope" value="Bacteria"/>
</dbReference>
<dbReference type="HOGENOM" id="CLU_023208_0_2_5"/>
<dbReference type="OrthoDB" id="9806197at2"/>
<dbReference type="Proteomes" id="UP000001963">
    <property type="component" value="Chromosome"/>
</dbReference>
<dbReference type="GO" id="GO:0005737">
    <property type="term" value="C:cytoplasm"/>
    <property type="evidence" value="ECO:0007669"/>
    <property type="project" value="UniProtKB-SubCell"/>
</dbReference>
<dbReference type="GO" id="GO:0005506">
    <property type="term" value="F:iron ion binding"/>
    <property type="evidence" value="ECO:0007669"/>
    <property type="project" value="UniProtKB-UniRule"/>
</dbReference>
<dbReference type="GO" id="GO:0061711">
    <property type="term" value="F:N(6)-L-threonylcarbamoyladenine synthase activity"/>
    <property type="evidence" value="ECO:0007669"/>
    <property type="project" value="UniProtKB-EC"/>
</dbReference>
<dbReference type="GO" id="GO:0002949">
    <property type="term" value="P:tRNA threonylcarbamoyladenosine modification"/>
    <property type="evidence" value="ECO:0007669"/>
    <property type="project" value="UniProtKB-UniRule"/>
</dbReference>
<dbReference type="FunFam" id="3.30.420.40:FF:000012">
    <property type="entry name" value="tRNA N6-adenosine threonylcarbamoyltransferase"/>
    <property type="match status" value="1"/>
</dbReference>
<dbReference type="FunFam" id="3.30.420.40:FF:000040">
    <property type="entry name" value="tRNA N6-adenosine threonylcarbamoyltransferase"/>
    <property type="match status" value="1"/>
</dbReference>
<dbReference type="Gene3D" id="3.30.420.40">
    <property type="match status" value="2"/>
</dbReference>
<dbReference type="HAMAP" id="MF_01445">
    <property type="entry name" value="TsaD"/>
    <property type="match status" value="1"/>
</dbReference>
<dbReference type="InterPro" id="IPR043129">
    <property type="entry name" value="ATPase_NBD"/>
</dbReference>
<dbReference type="InterPro" id="IPR000905">
    <property type="entry name" value="Gcp-like_dom"/>
</dbReference>
<dbReference type="InterPro" id="IPR017861">
    <property type="entry name" value="KAE1/TsaD"/>
</dbReference>
<dbReference type="InterPro" id="IPR022450">
    <property type="entry name" value="TsaD"/>
</dbReference>
<dbReference type="NCBIfam" id="TIGR00329">
    <property type="entry name" value="gcp_kae1"/>
    <property type="match status" value="1"/>
</dbReference>
<dbReference type="NCBIfam" id="TIGR03723">
    <property type="entry name" value="T6A_TsaD_YgjD"/>
    <property type="match status" value="1"/>
</dbReference>
<dbReference type="PANTHER" id="PTHR11735">
    <property type="entry name" value="TRNA N6-ADENOSINE THREONYLCARBAMOYLTRANSFERASE"/>
    <property type="match status" value="1"/>
</dbReference>
<dbReference type="PANTHER" id="PTHR11735:SF6">
    <property type="entry name" value="TRNA N6-ADENOSINE THREONYLCARBAMOYLTRANSFERASE, MITOCHONDRIAL"/>
    <property type="match status" value="1"/>
</dbReference>
<dbReference type="Pfam" id="PF00814">
    <property type="entry name" value="TsaD"/>
    <property type="match status" value="1"/>
</dbReference>
<dbReference type="PRINTS" id="PR00789">
    <property type="entry name" value="OSIALOPTASE"/>
</dbReference>
<dbReference type="SUPFAM" id="SSF53067">
    <property type="entry name" value="Actin-like ATPase domain"/>
    <property type="match status" value="1"/>
</dbReference>
<protein>
    <recommendedName>
        <fullName evidence="1">tRNA N6-adenosine threonylcarbamoyltransferase</fullName>
        <ecNumber evidence="1">2.3.1.234</ecNumber>
    </recommendedName>
    <alternativeName>
        <fullName evidence="1">N6-L-threonylcarbamoyladenine synthase</fullName>
        <shortName evidence="1">t(6)A synthase</shortName>
    </alternativeName>
    <alternativeName>
        <fullName evidence="1">t(6)A37 threonylcarbamoyladenosine biosynthesis protein TsaD</fullName>
    </alternativeName>
    <alternativeName>
        <fullName evidence="1">tRNA threonylcarbamoyladenosine biosynthesis protein TsaD</fullName>
    </alternativeName>
</protein>
<accession>Q0BPC9</accession>
<reference key="1">
    <citation type="journal article" date="2007" name="J. Bacteriol.">
        <title>Genome sequence analysis of the emerging human pathogenic acetic acid bacterium Granulibacter bethesdensis.</title>
        <authorList>
            <person name="Greenberg D.E."/>
            <person name="Porcella S.F."/>
            <person name="Zelazny A.M."/>
            <person name="Virtaneva K."/>
            <person name="Sturdevant D.E."/>
            <person name="Kupko J.J. III"/>
            <person name="Barbian K.D."/>
            <person name="Babar A."/>
            <person name="Dorward D.W."/>
            <person name="Holland S.M."/>
        </authorList>
    </citation>
    <scope>NUCLEOTIDE SEQUENCE [LARGE SCALE GENOMIC DNA]</scope>
    <source>
        <strain>ATCC BAA-1260 / CGDNIH1</strain>
    </source>
</reference>